<protein>
    <recommendedName>
        <fullName>Interleukin-27 receptor subunit alpha</fullName>
        <shortName>IL-27 receptor subunit alpha</shortName>
        <shortName>IL-27R subunit alpha</shortName>
        <shortName>IL-27R-alpha</shortName>
        <shortName>IL-27RA</shortName>
    </recommendedName>
    <alternativeName>
        <fullName>Cytokine receptor WSX-1</fullName>
    </alternativeName>
    <alternativeName>
        <fullName>Cytokine receptor-like 1</fullName>
    </alternativeName>
    <alternativeName>
        <fullName>Type I T-cell cytokine receptor</fullName>
        <shortName>TCCR</shortName>
    </alternativeName>
    <alternativeName>
        <fullName>ZcytoR1</fullName>
    </alternativeName>
</protein>
<organism>
    <name type="scientific">Homo sapiens</name>
    <name type="common">Human</name>
    <dbReference type="NCBI Taxonomy" id="9606"/>
    <lineage>
        <taxon>Eukaryota</taxon>
        <taxon>Metazoa</taxon>
        <taxon>Chordata</taxon>
        <taxon>Craniata</taxon>
        <taxon>Vertebrata</taxon>
        <taxon>Euteleostomi</taxon>
        <taxon>Mammalia</taxon>
        <taxon>Eutheria</taxon>
        <taxon>Euarchontoglires</taxon>
        <taxon>Primates</taxon>
        <taxon>Haplorrhini</taxon>
        <taxon>Catarrhini</taxon>
        <taxon>Hominidae</taxon>
        <taxon>Homo</taxon>
    </lineage>
</organism>
<comment type="function">
    <text evidence="5 6">Receptor for IL27. Requires IL6ST/GP130 to mediate signal transduction in response to IL27. This signaling system acts through STAT3 and STAT1. Acts as a receptor for the neuroprotective peptide humanin as part of a complex with IL6ST/GP130 and CNTFR (PubMed:19386761). Involved in the regulation of Th1-type immune responses. Also appears to be involved in innate defense mechanisms.</text>
</comment>
<comment type="subunit">
    <text evidence="6">Component of a receptor complex composed of IL6ST/GP130, IL27RA/WSX1 and CNTFR which interacts with the neuroprotective peptide humanin.</text>
</comment>
<comment type="interaction">
    <interactant intactId="EBI-19045531">
        <id>Q6UWB1</id>
    </interactant>
    <interactant intactId="EBI-12244618">
        <id>Q6PL45-2</id>
        <label>BRICD5</label>
    </interactant>
    <organismsDiffer>false</organismsDiffer>
    <experiments>3</experiments>
</comment>
<comment type="interaction">
    <interactant intactId="EBI-19045531">
        <id>Q6UWB1</id>
    </interactant>
    <interactant intactId="EBI-751440">
        <id>P57739</id>
        <label>CLDN2</label>
    </interactant>
    <organismsDiffer>false</organismsDiffer>
    <experiments>3</experiments>
</comment>
<comment type="interaction">
    <interactant intactId="EBI-19045531">
        <id>Q6UWB1</id>
    </interactant>
    <interactant intactId="EBI-10244198">
        <id>Q5J5C9</id>
        <label>DEFB121</label>
    </interactant>
    <organismsDiffer>false</organismsDiffer>
    <experiments>3</experiments>
</comment>
<comment type="interaction">
    <interactant intactId="EBI-19045531">
        <id>Q6UWB1</id>
    </interactant>
    <interactant intactId="EBI-12831318">
        <id>Q96Q80</id>
        <label>DERL3</label>
    </interactant>
    <organismsDiffer>false</organismsDiffer>
    <experiments>3</experiments>
</comment>
<comment type="interaction">
    <interactant intactId="EBI-19045531">
        <id>Q6UWB1</id>
    </interactant>
    <interactant intactId="EBI-3925203">
        <id>Q8N3T1</id>
        <label>GALNT15</label>
    </interactant>
    <organismsDiffer>false</organismsDiffer>
    <experiments>3</experiments>
</comment>
<comment type="interaction">
    <interactant intactId="EBI-19045531">
        <id>Q6UWB1</id>
    </interactant>
    <interactant intactId="EBI-3920969">
        <id>Q6N075</id>
        <label>MFSD5</label>
    </interactant>
    <organismsDiffer>false</organismsDiffer>
    <experiments>3</experiments>
</comment>
<comment type="interaction">
    <interactant intactId="EBI-19045531">
        <id>Q6UWB1</id>
    </interactant>
    <interactant intactId="EBI-10290130">
        <id>Q96JW4</id>
        <label>SLC41A2</label>
    </interactant>
    <organismsDiffer>false</organismsDiffer>
    <experiments>3</experiments>
</comment>
<comment type="interaction">
    <interactant intactId="EBI-19045531">
        <id>Q6UWB1</id>
    </interactant>
    <interactant intactId="EBI-751210">
        <id>Q96EC8</id>
        <label>YIPF6</label>
    </interactant>
    <organismsDiffer>false</organismsDiffer>
    <experiments>3</experiments>
</comment>
<comment type="subcellular location">
    <subcellularLocation>
        <location>Membrane</location>
        <topology>Single-pass type I membrane protein</topology>
    </subcellularLocation>
</comment>
<comment type="tissue specificity">
    <text evidence="4 7">Highly expressed in lymphoid tissues such as spleen, lymph nodes and peripheral blood leukocytes. Weakly expressed in other tissues examined including heart, brain, fetal and adult lung, liver, skeletal muscle, kidney, pancreas, prostate, testis, ovary, small intestine, kidney and colon. In the lymphoid system, higher level expression in CD4+ T-cell subsets than in CD8+ T-cell subsets. Also weaker expression in CD19+ B-cells and monocytes.</text>
</comment>
<comment type="domain">
    <text>The WSXWS motif appears to be necessary for proper protein folding and thereby efficient intracellular transport and cell-surface receptor binding.</text>
</comment>
<comment type="domain">
    <text>The box 1 motif is required for JAK interaction and/or activation.</text>
</comment>
<comment type="similarity">
    <text evidence="8">Belongs to the type I cytokine receptor family. Type 2 subfamily.</text>
</comment>
<name>I27RA_HUMAN</name>
<reference key="1">
    <citation type="journal article" date="1998" name="Biochem. Biophys. Res. Commun.">
        <title>Cloning and characterization of a novel class I cytokine receptor.</title>
        <authorList>
            <person name="Sprecher C.A."/>
            <person name="Grant F.J."/>
            <person name="Baumgartner J.W."/>
            <person name="Presnell S.R."/>
            <person name="Schrader S.K."/>
            <person name="Yamagiwa T."/>
            <person name="Whitmore T.E."/>
            <person name="O'Hara P.J."/>
            <person name="Foster D.F."/>
        </authorList>
    </citation>
    <scope>NUCLEOTIDE SEQUENCE [MRNA]</scope>
    <scope>TISSUE SPECIFICITY</scope>
    <source>
        <tissue>Erythroleukemia</tissue>
    </source>
</reference>
<reference key="2">
    <citation type="submission" date="1998-11" db="EMBL/GenBank/DDBJ databases">
        <title>A novel gp130-like cytokine receptor.</title>
        <authorList>
            <person name="Zhang W."/>
            <person name="Wan T."/>
            <person name="He L."/>
            <person name="Yuan Z."/>
            <person name="Cao X."/>
        </authorList>
    </citation>
    <scope>NUCLEOTIDE SEQUENCE [MRNA]</scope>
</reference>
<reference key="3">
    <citation type="journal article" date="2000" name="Nature">
        <title>Development of Th1-type immune responses requires the type I cytokine receptor TCCR.</title>
        <authorList>
            <person name="Chen Q."/>
            <person name="Ghilardi N."/>
            <person name="Wang H."/>
            <person name="Baker T."/>
            <person name="Xie M.-H."/>
            <person name="Gurney A."/>
            <person name="Grewal I.S."/>
            <person name="de Sauvage F.J."/>
        </authorList>
    </citation>
    <scope>NUCLEOTIDE SEQUENCE [MRNA]</scope>
    <scope>TISSUE SPECIFICITY</scope>
    <source>
        <tissue>Peripheral blood leukocyte</tissue>
    </source>
</reference>
<reference key="4">
    <citation type="submission" date="2006-10" db="EMBL/GenBank/DDBJ databases">
        <authorList>
            <person name="Livingston R.J."/>
            <person name="Shaffer T."/>
            <person name="McFarland I."/>
            <person name="Nguyen C.P."/>
            <person name="Stanaway I.B."/>
            <person name="Rajkumar N."/>
            <person name="Johnson E.J."/>
            <person name="da Ponte S.H."/>
            <person name="Willa H."/>
            <person name="Ahearn M.O."/>
            <person name="Bertucci C."/>
            <person name="Acklestad J."/>
            <person name="Carroll A."/>
            <person name="Swanson J."/>
            <person name="Gildersleeve H.I."/>
            <person name="Nickerson D.A."/>
        </authorList>
    </citation>
    <scope>NUCLEOTIDE SEQUENCE [GENOMIC DNA]</scope>
</reference>
<reference key="5">
    <citation type="journal article" date="2003" name="Genome Res.">
        <title>The secreted protein discovery initiative (SPDI), a large-scale effort to identify novel human secreted and transmembrane proteins: a bioinformatics assessment.</title>
        <authorList>
            <person name="Clark H.F."/>
            <person name="Gurney A.L."/>
            <person name="Abaya E."/>
            <person name="Baker K."/>
            <person name="Baldwin D.T."/>
            <person name="Brush J."/>
            <person name="Chen J."/>
            <person name="Chow B."/>
            <person name="Chui C."/>
            <person name="Crowley C."/>
            <person name="Currell B."/>
            <person name="Deuel B."/>
            <person name="Dowd P."/>
            <person name="Eaton D."/>
            <person name="Foster J.S."/>
            <person name="Grimaldi C."/>
            <person name="Gu Q."/>
            <person name="Hass P.E."/>
            <person name="Heldens S."/>
            <person name="Huang A."/>
            <person name="Kim H.S."/>
            <person name="Klimowski L."/>
            <person name="Jin Y."/>
            <person name="Johnson S."/>
            <person name="Lee J."/>
            <person name="Lewis L."/>
            <person name="Liao D."/>
            <person name="Mark M.R."/>
            <person name="Robbie E."/>
            <person name="Sanchez C."/>
            <person name="Schoenfeld J."/>
            <person name="Seshagiri S."/>
            <person name="Simmons L."/>
            <person name="Singh J."/>
            <person name="Smith V."/>
            <person name="Stinson J."/>
            <person name="Vagts A."/>
            <person name="Vandlen R.L."/>
            <person name="Watanabe C."/>
            <person name="Wieand D."/>
            <person name="Woods K."/>
            <person name="Xie M.-H."/>
            <person name="Yansura D.G."/>
            <person name="Yi S."/>
            <person name="Yu G."/>
            <person name="Yuan J."/>
            <person name="Zhang M."/>
            <person name="Zhang Z."/>
            <person name="Goddard A.D."/>
            <person name="Wood W.I."/>
            <person name="Godowski P.J."/>
            <person name="Gray A.M."/>
        </authorList>
    </citation>
    <scope>NUCLEOTIDE SEQUENCE [LARGE SCALE MRNA]</scope>
</reference>
<reference key="6">
    <citation type="journal article" date="2004" name="Genome Res.">
        <title>The status, quality, and expansion of the NIH full-length cDNA project: the Mammalian Gene Collection (MGC).</title>
        <authorList>
            <consortium name="The MGC Project Team"/>
        </authorList>
    </citation>
    <scope>NUCLEOTIDE SEQUENCE [LARGE SCALE MRNA]</scope>
    <source>
        <tissue>Blood</tissue>
    </source>
</reference>
<reference key="7">
    <citation type="journal article" date="2004" name="J. Immunol.">
        <title>WSX-1 and glycoprotein 130 constitute a signal-transducing receptor for IL-27.</title>
        <authorList>
            <person name="Pflanz S."/>
            <person name="Hibbert L."/>
            <person name="Mattson J."/>
            <person name="Rosales R."/>
            <person name="Vaisberg E."/>
            <person name="Bazan J.F."/>
            <person name="Phillips J.H."/>
            <person name="McClanahan T.K."/>
            <person name="de Waal Malefyt R."/>
            <person name="Kastelein R.A."/>
        </authorList>
    </citation>
    <scope>FUNCTIONAL COMPLEX WITH IL6ST</scope>
</reference>
<reference key="8">
    <citation type="journal article" date="2009" name="Mol. Biol. Cell">
        <title>Humanin inhibits neuronal cell death by interacting with a cytokine receptor complex or complexes involving CNTF receptor alpha/WSX-1/gp130.</title>
        <authorList>
            <person name="Hashimoto Y."/>
            <person name="Kurita M."/>
            <person name="Aiso S."/>
            <person name="Nishimoto I."/>
            <person name="Matsuoka M."/>
        </authorList>
    </citation>
    <scope>FUNCTION</scope>
    <scope>IDENTIFICATION IN HUMANIN RECEPTOR COMPLEX</scope>
</reference>
<sequence length="636" mass="69474">MRGGRGAPFWLWPLPKLALLPLLWVLFQRTRPQGSAGPLQCYGVGPLGDLNCSWEPLGDLGAPSELHLQSQKYRSNKTQTVAVAAGRSWVAIPREQLTMSDKLLVWGTKAGQPLWPPVFVNLETQMKPNAPRLGPDVDFSEDDPLEATVHWAPPTWPSHKVLICQFHYRRCQEAAWTLLEPELKTIPLTPVEIQDLELATGYKVYGRCRMEKEEDLWGEWSPILSFQTPPSAPKDVWVSGNLCGTPGGEEPLLLWKAPGPCVQVSYKVWFWVGGRELSPEGITCCCSLIPSGAEWARVSAVNATSWEPLTNLSLVCLDSASAPRSVAVSSIAGSTELLVTWQPGPGEPLEHVVDWARDGDPLEKLNWVRLPPGNLSALLPGNFTVGVPYRITVTAVSASGLASASSVWGFREELAPLVGPTLWRLQDAPPGTPAIAWGEVPRHQLRGHLTHYTLCAQSGTSPSVCMNVSGNTQSVTLPDLPWGPCELWVTASTIAGQGPPGPILRLHLPDNTLRWKVLPGILFLWGLFLLGCGLSLATSGRCYHLRHKVLPRWVWEKVPDPANSSSGQPHMEQVPEAQPLGDLPILEVEEMEPPPVMESSQPAQATAPLDSGYEKHFLPTPEELGLLGPPRPQVLA</sequence>
<feature type="signal peptide" evidence="1">
    <location>
        <begin position="1"/>
        <end position="32"/>
    </location>
</feature>
<feature type="chain" id="PRO_0000010876" description="Interleukin-27 receptor subunit alpha">
    <location>
        <begin position="33"/>
        <end position="636"/>
    </location>
</feature>
<feature type="topological domain" description="Extracellular" evidence="1">
    <location>
        <begin position="33"/>
        <end position="516"/>
    </location>
</feature>
<feature type="transmembrane region" description="Helical" evidence="1">
    <location>
        <begin position="517"/>
        <end position="537"/>
    </location>
</feature>
<feature type="topological domain" description="Cytoplasmic" evidence="1">
    <location>
        <begin position="538"/>
        <end position="636"/>
    </location>
</feature>
<feature type="domain" description="Fibronectin type-III 1" evidence="2">
    <location>
        <begin position="131"/>
        <end position="231"/>
    </location>
</feature>
<feature type="domain" description="Fibronectin type-III 2" evidence="2">
    <location>
        <begin position="322"/>
        <end position="417"/>
    </location>
</feature>
<feature type="domain" description="Fibronectin type-III 3" evidence="2">
    <location>
        <begin position="419"/>
        <end position="511"/>
    </location>
</feature>
<feature type="region of interest" description="Disordered" evidence="3">
    <location>
        <begin position="587"/>
        <end position="636"/>
    </location>
</feature>
<feature type="short sequence motif" description="WSXWS motif">
    <location>
        <begin position="217"/>
        <end position="221"/>
    </location>
</feature>
<feature type="short sequence motif" description="Box 1 motif">
    <location>
        <begin position="554"/>
        <end position="562"/>
    </location>
</feature>
<feature type="compositionally biased region" description="Low complexity" evidence="3">
    <location>
        <begin position="618"/>
        <end position="628"/>
    </location>
</feature>
<feature type="glycosylation site" description="N-linked (GlcNAc...) asparagine" evidence="1">
    <location>
        <position position="51"/>
    </location>
</feature>
<feature type="glycosylation site" description="N-linked (GlcNAc...) asparagine" evidence="1">
    <location>
        <position position="76"/>
    </location>
</feature>
<feature type="glycosylation site" description="N-linked (GlcNAc...) asparagine" evidence="1">
    <location>
        <position position="302"/>
    </location>
</feature>
<feature type="glycosylation site" description="N-linked (GlcNAc...) asparagine" evidence="1">
    <location>
        <position position="311"/>
    </location>
</feature>
<feature type="glycosylation site" description="N-linked (GlcNAc...) asparagine" evidence="1">
    <location>
        <position position="374"/>
    </location>
</feature>
<feature type="glycosylation site" description="N-linked (GlcNAc...) asparagine" evidence="1">
    <location>
        <position position="382"/>
    </location>
</feature>
<feature type="glycosylation site" description="N-linked (GlcNAc...) asparagine" evidence="1">
    <location>
        <position position="467"/>
    </location>
</feature>
<feature type="sequence conflict" description="In Ref. 3; AAG27297 and 5; AAQ89235." evidence="8" ref="3 5">
    <original>A</original>
    <variation>G</variation>
    <location>
        <position position="7"/>
    </location>
</feature>
<feature type="strand" evidence="10">
    <location>
        <begin position="40"/>
        <end position="43"/>
    </location>
</feature>
<feature type="strand" evidence="10">
    <location>
        <begin position="45"/>
        <end position="47"/>
    </location>
</feature>
<feature type="strand" evidence="10">
    <location>
        <begin position="50"/>
        <end position="53"/>
    </location>
</feature>
<feature type="strand" evidence="10">
    <location>
        <begin position="64"/>
        <end position="74"/>
    </location>
</feature>
<feature type="strand" evidence="10">
    <location>
        <begin position="79"/>
        <end position="82"/>
    </location>
</feature>
<feature type="strand" evidence="10">
    <location>
        <begin position="88"/>
        <end position="92"/>
    </location>
</feature>
<feature type="helix" evidence="10">
    <location>
        <begin position="94"/>
        <end position="96"/>
    </location>
</feature>
<feature type="strand" evidence="10">
    <location>
        <begin position="102"/>
        <end position="109"/>
    </location>
</feature>
<feature type="strand" evidence="10">
    <location>
        <begin position="118"/>
        <end position="121"/>
    </location>
</feature>
<feature type="turn" evidence="10">
    <location>
        <begin position="122"/>
        <end position="124"/>
    </location>
</feature>
<feature type="strand" evidence="10">
    <location>
        <begin position="132"/>
        <end position="139"/>
    </location>
</feature>
<feature type="strand" evidence="10">
    <location>
        <begin position="141"/>
        <end position="144"/>
    </location>
</feature>
<feature type="strand" evidence="10">
    <location>
        <begin position="146"/>
        <end position="152"/>
    </location>
</feature>
<feature type="strand" evidence="10">
    <location>
        <begin position="155"/>
        <end position="157"/>
    </location>
</feature>
<feature type="strand" evidence="10">
    <location>
        <begin position="163"/>
        <end position="172"/>
    </location>
</feature>
<feature type="strand" evidence="10">
    <location>
        <begin position="183"/>
        <end position="187"/>
    </location>
</feature>
<feature type="strand" evidence="10">
    <location>
        <begin position="191"/>
        <end position="194"/>
    </location>
</feature>
<feature type="strand" evidence="10">
    <location>
        <begin position="201"/>
        <end position="209"/>
    </location>
</feature>
<feature type="strand" evidence="10">
    <location>
        <begin position="224"/>
        <end position="227"/>
    </location>
</feature>
<feature type="helix" evidence="9">
    <location>
        <begin position="621"/>
        <end position="624"/>
    </location>
</feature>
<proteinExistence type="evidence at protein level"/>
<gene>
    <name type="primary">IL27RA</name>
    <name type="synonym">CRL1</name>
    <name type="synonym">TCCR</name>
    <name type="synonym">WSX1</name>
    <name type="ORF">UNQ296/PRO336</name>
</gene>
<accession>Q6UWB1</accession>
<accession>A0N0L1</accession>
<accession>O60624</accession>
<dbReference type="EMBL" id="AF053004">
    <property type="protein sequence ID" value="AAC39755.1"/>
    <property type="molecule type" value="mRNA"/>
</dbReference>
<dbReference type="EMBL" id="AF106912">
    <property type="protein sequence ID" value="AAG26090.1"/>
    <property type="molecule type" value="mRNA"/>
</dbReference>
<dbReference type="EMBL" id="AF265242">
    <property type="protein sequence ID" value="AAG27297.1"/>
    <property type="molecule type" value="mRNA"/>
</dbReference>
<dbReference type="EMBL" id="EF064719">
    <property type="protein sequence ID" value="ABK41902.1"/>
    <property type="molecule type" value="Genomic_DNA"/>
</dbReference>
<dbReference type="EMBL" id="AY358876">
    <property type="protein sequence ID" value="AAQ89235.1"/>
    <property type="molecule type" value="mRNA"/>
</dbReference>
<dbReference type="EMBL" id="BC028003">
    <property type="protein sequence ID" value="AAH28003.1"/>
    <property type="molecule type" value="mRNA"/>
</dbReference>
<dbReference type="CCDS" id="CCDS12303.1"/>
<dbReference type="PIR" id="JW0047">
    <property type="entry name" value="JW0047"/>
</dbReference>
<dbReference type="RefSeq" id="NP_004834.1">
    <property type="nucleotide sequence ID" value="NM_004843.4"/>
</dbReference>
<dbReference type="PDB" id="7T5M">
    <property type="method" value="X-ray"/>
    <property type="resolution" value="1.67 A"/>
    <property type="chains" value="E/F=617-636"/>
</dbReference>
<dbReference type="PDB" id="7U7N">
    <property type="method" value="EM"/>
    <property type="resolution" value="3.47 A"/>
    <property type="chains" value="A=36-231"/>
</dbReference>
<dbReference type="PDB" id="8D85">
    <property type="method" value="EM"/>
    <property type="resolution" value="3.81 A"/>
    <property type="chains" value="A=33-516"/>
</dbReference>
<dbReference type="PDBsum" id="7T5M"/>
<dbReference type="PDBsum" id="7U7N"/>
<dbReference type="PDBsum" id="8D85"/>
<dbReference type="EMDB" id="EMD-26382"/>
<dbReference type="EMDB" id="EMD-27246"/>
<dbReference type="EMDB" id="EMD-27247"/>
<dbReference type="SMR" id="Q6UWB1"/>
<dbReference type="BioGRID" id="114852">
    <property type="interactions" value="77"/>
</dbReference>
<dbReference type="ComplexPortal" id="CPX-10335">
    <property type="entry name" value="Interleukin-35 receptor ligand type 2 complex"/>
</dbReference>
<dbReference type="ComplexPortal" id="CPX-8836">
    <property type="entry name" value="Interleukin-27 receptor-ligand complex"/>
</dbReference>
<dbReference type="FunCoup" id="Q6UWB1">
    <property type="interactions" value="515"/>
</dbReference>
<dbReference type="IntAct" id="Q6UWB1">
    <property type="interactions" value="64"/>
</dbReference>
<dbReference type="STRING" id="9606.ENSP00000263379"/>
<dbReference type="GlyCosmos" id="Q6UWB1">
    <property type="glycosylation" value="7 sites, No reported glycans"/>
</dbReference>
<dbReference type="GlyGen" id="Q6UWB1">
    <property type="glycosylation" value="8 sites, 3 N-linked glycans (3 sites)"/>
</dbReference>
<dbReference type="iPTMnet" id="Q6UWB1"/>
<dbReference type="PhosphoSitePlus" id="Q6UWB1"/>
<dbReference type="SwissPalm" id="Q6UWB1"/>
<dbReference type="BioMuta" id="IL27RA"/>
<dbReference type="DMDM" id="116242518"/>
<dbReference type="jPOST" id="Q6UWB1"/>
<dbReference type="MassIVE" id="Q6UWB1"/>
<dbReference type="PaxDb" id="9606-ENSP00000263379"/>
<dbReference type="PeptideAtlas" id="Q6UWB1"/>
<dbReference type="ProteomicsDB" id="67462"/>
<dbReference type="Antibodypedia" id="13590">
    <property type="antibodies" value="480 antibodies from 36 providers"/>
</dbReference>
<dbReference type="DNASU" id="9466"/>
<dbReference type="Ensembl" id="ENST00000263379.4">
    <property type="protein sequence ID" value="ENSP00000263379.1"/>
    <property type="gene ID" value="ENSG00000104998.4"/>
</dbReference>
<dbReference type="Ensembl" id="ENST00000672064.1">
    <property type="protein sequence ID" value="ENSP00000500946.1"/>
    <property type="gene ID" value="ENSG00000288185.1"/>
</dbReference>
<dbReference type="GeneID" id="9466"/>
<dbReference type="KEGG" id="hsa:9466"/>
<dbReference type="MANE-Select" id="ENST00000263379.4">
    <property type="protein sequence ID" value="ENSP00000263379.1"/>
    <property type="RefSeq nucleotide sequence ID" value="NM_004843.4"/>
    <property type="RefSeq protein sequence ID" value="NP_004834.1"/>
</dbReference>
<dbReference type="UCSC" id="uc002mxx.5">
    <property type="organism name" value="human"/>
</dbReference>
<dbReference type="AGR" id="HGNC:17290"/>
<dbReference type="CTD" id="9466"/>
<dbReference type="DisGeNET" id="9466"/>
<dbReference type="GeneCards" id="IL27RA"/>
<dbReference type="HGNC" id="HGNC:17290">
    <property type="gene designation" value="IL27RA"/>
</dbReference>
<dbReference type="HPA" id="ENSG00000104998">
    <property type="expression patterns" value="Tissue enhanced (lymphoid)"/>
</dbReference>
<dbReference type="MalaCards" id="IL27RA"/>
<dbReference type="MIM" id="605350">
    <property type="type" value="gene"/>
</dbReference>
<dbReference type="neXtProt" id="NX_Q6UWB1"/>
<dbReference type="OpenTargets" id="ENSG00000104998"/>
<dbReference type="PharmGKB" id="PA134891276"/>
<dbReference type="VEuPathDB" id="HostDB:ENSG00000104998"/>
<dbReference type="eggNOG" id="ENOG502RF72">
    <property type="taxonomic scope" value="Eukaryota"/>
</dbReference>
<dbReference type="GeneTree" id="ENSGT00700000104610"/>
<dbReference type="HOGENOM" id="CLU_029896_0_0_1"/>
<dbReference type="InParanoid" id="Q6UWB1"/>
<dbReference type="OMA" id="TCCCSLI"/>
<dbReference type="OrthoDB" id="5989951at2759"/>
<dbReference type="PAN-GO" id="Q6UWB1">
    <property type="GO annotations" value="9 GO annotations based on evolutionary models"/>
</dbReference>
<dbReference type="PhylomeDB" id="Q6UWB1"/>
<dbReference type="TreeFam" id="TF338122"/>
<dbReference type="PathwayCommons" id="Q6UWB1"/>
<dbReference type="Reactome" id="R-HSA-8984722">
    <property type="pathway name" value="Interleukin-35 Signalling"/>
</dbReference>
<dbReference type="Reactome" id="R-HSA-9020956">
    <property type="pathway name" value="Interleukin-27 signaling"/>
</dbReference>
<dbReference type="SignaLink" id="Q6UWB1"/>
<dbReference type="SIGNOR" id="Q6UWB1"/>
<dbReference type="BioGRID-ORCS" id="9466">
    <property type="hits" value="13 hits in 1154 CRISPR screens"/>
</dbReference>
<dbReference type="ChiTaRS" id="IL27RA">
    <property type="organism name" value="human"/>
</dbReference>
<dbReference type="GeneWiki" id="Interleukin_27_receptor,_alpha_subunit"/>
<dbReference type="GenomeRNAi" id="9466"/>
<dbReference type="Pharos" id="Q6UWB1">
    <property type="development level" value="Tbio"/>
</dbReference>
<dbReference type="PRO" id="PR:Q6UWB1"/>
<dbReference type="Proteomes" id="UP000005640">
    <property type="component" value="Chromosome 19"/>
</dbReference>
<dbReference type="RNAct" id="Q6UWB1">
    <property type="molecule type" value="protein"/>
</dbReference>
<dbReference type="Bgee" id="ENSG00000104998">
    <property type="expression patterns" value="Expressed in granulocyte and 97 other cell types or tissues"/>
</dbReference>
<dbReference type="GO" id="GO:0005886">
    <property type="term" value="C:plasma membrane"/>
    <property type="evidence" value="ECO:0000304"/>
    <property type="project" value="Reactome"/>
</dbReference>
<dbReference type="GO" id="GO:0045509">
    <property type="term" value="F:interleukin-27 receptor activity"/>
    <property type="evidence" value="ECO:0000318"/>
    <property type="project" value="GO_Central"/>
</dbReference>
<dbReference type="GO" id="GO:0004888">
    <property type="term" value="F:transmembrane signaling receptor activity"/>
    <property type="evidence" value="ECO:0000304"/>
    <property type="project" value="ProtInc"/>
</dbReference>
<dbReference type="GO" id="GO:0007166">
    <property type="term" value="P:cell surface receptor signaling pathway"/>
    <property type="evidence" value="ECO:0000304"/>
    <property type="project" value="ProtInc"/>
</dbReference>
<dbReference type="GO" id="GO:0050830">
    <property type="term" value="P:defense response to Gram-positive bacterium"/>
    <property type="evidence" value="ECO:0007669"/>
    <property type="project" value="Ensembl"/>
</dbReference>
<dbReference type="GO" id="GO:0006955">
    <property type="term" value="P:immune response"/>
    <property type="evidence" value="ECO:0000304"/>
    <property type="project" value="ProtInc"/>
</dbReference>
<dbReference type="GO" id="GO:0032700">
    <property type="term" value="P:negative regulation of interleukin-17 production"/>
    <property type="evidence" value="ECO:0007669"/>
    <property type="project" value="Ensembl"/>
</dbReference>
<dbReference type="GO" id="GO:0032715">
    <property type="term" value="P:negative regulation of interleukin-6 production"/>
    <property type="evidence" value="ECO:0007669"/>
    <property type="project" value="Ensembl"/>
</dbReference>
<dbReference type="GO" id="GO:0043524">
    <property type="term" value="P:negative regulation of neuron apoptotic process"/>
    <property type="evidence" value="ECO:0000315"/>
    <property type="project" value="UniProtKB"/>
</dbReference>
<dbReference type="GO" id="GO:2000408">
    <property type="term" value="P:negative regulation of T cell extravasation"/>
    <property type="evidence" value="ECO:0007669"/>
    <property type="project" value="Ensembl"/>
</dbReference>
<dbReference type="GO" id="GO:2000317">
    <property type="term" value="P:negative regulation of T-helper 17 type immune response"/>
    <property type="evidence" value="ECO:0007669"/>
    <property type="project" value="Ensembl"/>
</dbReference>
<dbReference type="GO" id="GO:0032720">
    <property type="term" value="P:negative regulation of tumor necrosis factor production"/>
    <property type="evidence" value="ECO:0007669"/>
    <property type="project" value="Ensembl"/>
</dbReference>
<dbReference type="GO" id="GO:0002829">
    <property type="term" value="P:negative regulation of type 2 immune response"/>
    <property type="evidence" value="ECO:0000318"/>
    <property type="project" value="GO_Central"/>
</dbReference>
<dbReference type="GO" id="GO:0002827">
    <property type="term" value="P:positive regulation of T-helper 1 type immune response"/>
    <property type="evidence" value="ECO:0007669"/>
    <property type="project" value="Ensembl"/>
</dbReference>
<dbReference type="GO" id="GO:0032729">
    <property type="term" value="P:positive regulation of type II interferon production"/>
    <property type="evidence" value="ECO:0007669"/>
    <property type="project" value="Ensembl"/>
</dbReference>
<dbReference type="GO" id="GO:0048302">
    <property type="term" value="P:regulation of isotype switching to IgG isotypes"/>
    <property type="evidence" value="ECO:0007669"/>
    <property type="project" value="Ensembl"/>
</dbReference>
<dbReference type="CDD" id="cd00063">
    <property type="entry name" value="FN3"/>
    <property type="match status" value="1"/>
</dbReference>
<dbReference type="FunFam" id="2.60.40.10:FF:001521">
    <property type="entry name" value="Interleukin 27 receptor subunit alpha"/>
    <property type="match status" value="1"/>
</dbReference>
<dbReference type="FunFam" id="2.60.40.10:FF:001712">
    <property type="entry name" value="Interleukin-27 receptor subunit alpha"/>
    <property type="match status" value="1"/>
</dbReference>
<dbReference type="FunFam" id="2.60.40.10:FF:001691">
    <property type="entry name" value="interleukin-27 receptor subunit alpha"/>
    <property type="match status" value="1"/>
</dbReference>
<dbReference type="Gene3D" id="2.60.40.10">
    <property type="entry name" value="Immunoglobulins"/>
    <property type="match status" value="3"/>
</dbReference>
<dbReference type="InterPro" id="IPR003961">
    <property type="entry name" value="FN3_dom"/>
</dbReference>
<dbReference type="InterPro" id="IPR036116">
    <property type="entry name" value="FN3_sf"/>
</dbReference>
<dbReference type="InterPro" id="IPR013783">
    <property type="entry name" value="Ig-like_fold"/>
</dbReference>
<dbReference type="InterPro" id="IPR052672">
    <property type="entry name" value="Type1_Cytokine_Rcpt_Type2"/>
</dbReference>
<dbReference type="PANTHER" id="PTHR48423">
    <property type="entry name" value="INTERLEUKIN-27 RECEPTOR SUBUNIT ALPHA"/>
    <property type="match status" value="1"/>
</dbReference>
<dbReference type="PANTHER" id="PTHR48423:SF1">
    <property type="entry name" value="INTERLEUKIN-27 RECEPTOR SUBUNIT ALPHA"/>
    <property type="match status" value="1"/>
</dbReference>
<dbReference type="SMART" id="SM00060">
    <property type="entry name" value="FN3"/>
    <property type="match status" value="3"/>
</dbReference>
<dbReference type="SUPFAM" id="SSF49265">
    <property type="entry name" value="Fibronectin type III"/>
    <property type="match status" value="2"/>
</dbReference>
<dbReference type="PROSITE" id="PS50853">
    <property type="entry name" value="FN3"/>
    <property type="match status" value="3"/>
</dbReference>
<keyword id="KW-0002">3D-structure</keyword>
<keyword id="KW-0325">Glycoprotein</keyword>
<keyword id="KW-0472">Membrane</keyword>
<keyword id="KW-1267">Proteomics identification</keyword>
<keyword id="KW-0675">Receptor</keyword>
<keyword id="KW-1185">Reference proteome</keyword>
<keyword id="KW-0677">Repeat</keyword>
<keyword id="KW-0732">Signal</keyword>
<keyword id="KW-0812">Transmembrane</keyword>
<keyword id="KW-1133">Transmembrane helix</keyword>
<evidence type="ECO:0000255" key="1"/>
<evidence type="ECO:0000255" key="2">
    <source>
        <dbReference type="PROSITE-ProRule" id="PRU00316"/>
    </source>
</evidence>
<evidence type="ECO:0000256" key="3">
    <source>
        <dbReference type="SAM" id="MobiDB-lite"/>
    </source>
</evidence>
<evidence type="ECO:0000269" key="4">
    <source>
    </source>
</evidence>
<evidence type="ECO:0000269" key="5">
    <source>
    </source>
</evidence>
<evidence type="ECO:0000269" key="6">
    <source>
    </source>
</evidence>
<evidence type="ECO:0000269" key="7">
    <source>
    </source>
</evidence>
<evidence type="ECO:0000305" key="8"/>
<evidence type="ECO:0007829" key="9">
    <source>
        <dbReference type="PDB" id="7T5M"/>
    </source>
</evidence>
<evidence type="ECO:0007829" key="10">
    <source>
        <dbReference type="PDB" id="7U7N"/>
    </source>
</evidence>